<comment type="function">
    <text evidence="1">Binds 23S rRNA and is also seen to make contacts with the A and possibly P site tRNAs.</text>
</comment>
<comment type="subunit">
    <text evidence="1">Part of the 50S ribosomal subunit.</text>
</comment>
<comment type="similarity">
    <text evidence="1">Belongs to the universal ribosomal protein uL16 family.</text>
</comment>
<proteinExistence type="inferred from homology"/>
<accession>B1ZNE1</accession>
<feature type="chain" id="PRO_0000354605" description="Large ribosomal subunit protein uL16">
    <location>
        <begin position="1"/>
        <end position="140"/>
    </location>
</feature>
<feature type="region of interest" description="Disordered" evidence="2">
    <location>
        <begin position="1"/>
        <end position="24"/>
    </location>
</feature>
<protein>
    <recommendedName>
        <fullName evidence="1">Large ribosomal subunit protein uL16</fullName>
    </recommendedName>
    <alternativeName>
        <fullName evidence="3">50S ribosomal protein L16</fullName>
    </alternativeName>
</protein>
<dbReference type="EMBL" id="CP001032">
    <property type="protein sequence ID" value="ACB73510.1"/>
    <property type="molecule type" value="Genomic_DNA"/>
</dbReference>
<dbReference type="RefSeq" id="WP_012373048.1">
    <property type="nucleotide sequence ID" value="NC_010571.1"/>
</dbReference>
<dbReference type="SMR" id="B1ZNE1"/>
<dbReference type="STRING" id="452637.Oter_0219"/>
<dbReference type="KEGG" id="ote:Oter_0219"/>
<dbReference type="eggNOG" id="COG0197">
    <property type="taxonomic scope" value="Bacteria"/>
</dbReference>
<dbReference type="HOGENOM" id="CLU_078858_2_1_0"/>
<dbReference type="OrthoDB" id="9802589at2"/>
<dbReference type="Proteomes" id="UP000007013">
    <property type="component" value="Chromosome"/>
</dbReference>
<dbReference type="GO" id="GO:0022625">
    <property type="term" value="C:cytosolic large ribosomal subunit"/>
    <property type="evidence" value="ECO:0007669"/>
    <property type="project" value="TreeGrafter"/>
</dbReference>
<dbReference type="GO" id="GO:0019843">
    <property type="term" value="F:rRNA binding"/>
    <property type="evidence" value="ECO:0007669"/>
    <property type="project" value="UniProtKB-UniRule"/>
</dbReference>
<dbReference type="GO" id="GO:0003735">
    <property type="term" value="F:structural constituent of ribosome"/>
    <property type="evidence" value="ECO:0007669"/>
    <property type="project" value="InterPro"/>
</dbReference>
<dbReference type="GO" id="GO:0000049">
    <property type="term" value="F:tRNA binding"/>
    <property type="evidence" value="ECO:0007669"/>
    <property type="project" value="UniProtKB-KW"/>
</dbReference>
<dbReference type="GO" id="GO:0006412">
    <property type="term" value="P:translation"/>
    <property type="evidence" value="ECO:0007669"/>
    <property type="project" value="UniProtKB-UniRule"/>
</dbReference>
<dbReference type="CDD" id="cd01433">
    <property type="entry name" value="Ribosomal_L16_L10e"/>
    <property type="match status" value="1"/>
</dbReference>
<dbReference type="FunFam" id="3.90.1170.10:FF:000001">
    <property type="entry name" value="50S ribosomal protein L16"/>
    <property type="match status" value="1"/>
</dbReference>
<dbReference type="Gene3D" id="3.90.1170.10">
    <property type="entry name" value="Ribosomal protein L10e/L16"/>
    <property type="match status" value="1"/>
</dbReference>
<dbReference type="HAMAP" id="MF_01342">
    <property type="entry name" value="Ribosomal_uL16"/>
    <property type="match status" value="1"/>
</dbReference>
<dbReference type="InterPro" id="IPR047873">
    <property type="entry name" value="Ribosomal_uL16"/>
</dbReference>
<dbReference type="InterPro" id="IPR000114">
    <property type="entry name" value="Ribosomal_uL16_bact-type"/>
</dbReference>
<dbReference type="InterPro" id="IPR020798">
    <property type="entry name" value="Ribosomal_uL16_CS"/>
</dbReference>
<dbReference type="InterPro" id="IPR016180">
    <property type="entry name" value="Ribosomal_uL16_dom"/>
</dbReference>
<dbReference type="InterPro" id="IPR036920">
    <property type="entry name" value="Ribosomal_uL16_sf"/>
</dbReference>
<dbReference type="NCBIfam" id="TIGR01164">
    <property type="entry name" value="rplP_bact"/>
    <property type="match status" value="1"/>
</dbReference>
<dbReference type="PANTHER" id="PTHR12220">
    <property type="entry name" value="50S/60S RIBOSOMAL PROTEIN L16"/>
    <property type="match status" value="1"/>
</dbReference>
<dbReference type="PANTHER" id="PTHR12220:SF13">
    <property type="entry name" value="LARGE RIBOSOMAL SUBUNIT PROTEIN UL16M"/>
    <property type="match status" value="1"/>
</dbReference>
<dbReference type="Pfam" id="PF00252">
    <property type="entry name" value="Ribosomal_L16"/>
    <property type="match status" value="1"/>
</dbReference>
<dbReference type="PRINTS" id="PR00060">
    <property type="entry name" value="RIBOSOMALL16"/>
</dbReference>
<dbReference type="SUPFAM" id="SSF54686">
    <property type="entry name" value="Ribosomal protein L16p/L10e"/>
    <property type="match status" value="1"/>
</dbReference>
<dbReference type="PROSITE" id="PS00586">
    <property type="entry name" value="RIBOSOMAL_L16_1"/>
    <property type="match status" value="1"/>
</dbReference>
<sequence>MALAPARTKYRKSQKGSRAGNAKRGNTLAFGEFGLQSLTRGPMTGQQIEAARVTISRHLKRKGKLWIRVFPHKPITKKPAEVRQGQGKGPVEFYIAQIRPGAVLFELAGVPATTAKEAFRLADAKLPFHCRFIAREGAVV</sequence>
<evidence type="ECO:0000255" key="1">
    <source>
        <dbReference type="HAMAP-Rule" id="MF_01342"/>
    </source>
</evidence>
<evidence type="ECO:0000256" key="2">
    <source>
        <dbReference type="SAM" id="MobiDB-lite"/>
    </source>
</evidence>
<evidence type="ECO:0000305" key="3"/>
<keyword id="KW-1185">Reference proteome</keyword>
<keyword id="KW-0687">Ribonucleoprotein</keyword>
<keyword id="KW-0689">Ribosomal protein</keyword>
<keyword id="KW-0694">RNA-binding</keyword>
<keyword id="KW-0699">rRNA-binding</keyword>
<keyword id="KW-0820">tRNA-binding</keyword>
<organism>
    <name type="scientific">Opitutus terrae (strain DSM 11246 / JCM 15787 / PB90-1)</name>
    <dbReference type="NCBI Taxonomy" id="452637"/>
    <lineage>
        <taxon>Bacteria</taxon>
        <taxon>Pseudomonadati</taxon>
        <taxon>Verrucomicrobiota</taxon>
        <taxon>Opitutia</taxon>
        <taxon>Opitutales</taxon>
        <taxon>Opitutaceae</taxon>
        <taxon>Opitutus</taxon>
    </lineage>
</organism>
<name>RL16_OPITP</name>
<gene>
    <name evidence="1" type="primary">rplP</name>
    <name type="ordered locus">Oter_0219</name>
</gene>
<reference key="1">
    <citation type="journal article" date="2011" name="J. Bacteriol.">
        <title>Genome sequence of the verrucomicrobium Opitutus terrae PB90-1, an abundant inhabitant of rice paddy soil ecosystems.</title>
        <authorList>
            <person name="van Passel M.W."/>
            <person name="Kant R."/>
            <person name="Palva A."/>
            <person name="Copeland A."/>
            <person name="Lucas S."/>
            <person name="Lapidus A."/>
            <person name="Glavina del Rio T."/>
            <person name="Pitluck S."/>
            <person name="Goltsman E."/>
            <person name="Clum A."/>
            <person name="Sun H."/>
            <person name="Schmutz J."/>
            <person name="Larimer F.W."/>
            <person name="Land M.L."/>
            <person name="Hauser L."/>
            <person name="Kyrpides N."/>
            <person name="Mikhailova N."/>
            <person name="Richardson P.P."/>
            <person name="Janssen P.H."/>
            <person name="de Vos W.M."/>
            <person name="Smidt H."/>
        </authorList>
    </citation>
    <scope>NUCLEOTIDE SEQUENCE [LARGE SCALE GENOMIC DNA]</scope>
    <source>
        <strain>DSM 11246 / JCM 15787 / PB90-1</strain>
    </source>
</reference>